<protein>
    <recommendedName>
        <fullName evidence="1">Eukaryotic translation initiation factor 3 subunit H</fullName>
        <shortName evidence="1">eIF3h</shortName>
    </recommendedName>
</protein>
<name>EIF3H_CAEBR</name>
<keyword id="KW-0963">Cytoplasm</keyword>
<keyword id="KW-0396">Initiation factor</keyword>
<keyword id="KW-0648">Protein biosynthesis</keyword>
<keyword id="KW-1185">Reference proteome</keyword>
<gene>
    <name evidence="1 5" type="primary">eif-3.H</name>
    <name evidence="5" type="ORF">CBG04003</name>
</gene>
<organism>
    <name type="scientific">Caenorhabditis briggsae</name>
    <dbReference type="NCBI Taxonomy" id="6238"/>
    <lineage>
        <taxon>Eukaryota</taxon>
        <taxon>Metazoa</taxon>
        <taxon>Ecdysozoa</taxon>
        <taxon>Nematoda</taxon>
        <taxon>Chromadorea</taxon>
        <taxon>Rhabditida</taxon>
        <taxon>Rhabditina</taxon>
        <taxon>Rhabditomorpha</taxon>
        <taxon>Rhabditoidea</taxon>
        <taxon>Rhabditidae</taxon>
        <taxon>Peloderinae</taxon>
        <taxon>Caenorhabditis</taxon>
    </lineage>
</organism>
<comment type="function">
    <text evidence="1">Component of the eukaryotic translation initiation factor 3 (eIF-3) complex, which is involved in protein synthesis of a specialized repertoire of mRNAs and, together with other initiation factors, stimulates binding of mRNA and methionyl-tRNAi to the 40S ribosome. The eIF-3 complex specifically targets and initiates translation of a subset of mRNAs involved in cell proliferation.</text>
</comment>
<comment type="subunit">
    <text evidence="1">Component of the eukaryotic translation initiation factor 3 (eIF-3) complex.</text>
</comment>
<comment type="subcellular location">
    <subcellularLocation>
        <location evidence="1">Cytoplasm</location>
    </subcellularLocation>
</comment>
<comment type="similarity">
    <text evidence="1">Belongs to the eIF-3 subunit H family.</text>
</comment>
<comment type="sequence caution" evidence="4">
    <conflict type="erroneous gene model prediction">
        <sequence resource="EMBL-CDS" id="CAP24801"/>
    </conflict>
</comment>
<feature type="chain" id="PRO_0000365197" description="Eukaryotic translation initiation factor 3 subunit H">
    <location>
        <begin position="1"/>
        <end position="365"/>
    </location>
</feature>
<feature type="domain" description="MPN" evidence="2">
    <location>
        <begin position="15"/>
        <end position="166"/>
    </location>
</feature>
<feature type="region of interest" description="Disordered" evidence="3">
    <location>
        <begin position="276"/>
        <end position="295"/>
    </location>
</feature>
<feature type="compositionally biased region" description="Basic and acidic residues" evidence="3">
    <location>
        <begin position="277"/>
        <end position="287"/>
    </location>
</feature>
<accession>A8WVY9</accession>
<proteinExistence type="inferred from homology"/>
<evidence type="ECO:0000255" key="1">
    <source>
        <dbReference type="HAMAP-Rule" id="MF_03007"/>
    </source>
</evidence>
<evidence type="ECO:0000255" key="2">
    <source>
        <dbReference type="PROSITE-ProRule" id="PRU01182"/>
    </source>
</evidence>
<evidence type="ECO:0000256" key="3">
    <source>
        <dbReference type="SAM" id="MobiDB-lite"/>
    </source>
</evidence>
<evidence type="ECO:0000305" key="4"/>
<evidence type="ECO:0000312" key="5">
    <source>
        <dbReference type="WormBase" id="CBG04003"/>
    </source>
</evidence>
<sequence length="365" mass="41034">MSTAVTITAPSVKHILLDSLVVMKIVKHVDSELHAGISEVSGDACAGVLTGLVFLEDSRLEITNCFPTVRNEPVIDDDANAAQQYEEQKQQEMLDMLRKFRTMNIDYEIVGFYQSHQFGAGFSHDLVESMFDYQAMGPENVVLIYDPIKTRQGQLSIRAWRLSTAALDLASKNDWRPELVKSAGLTYQNMFEELPIIIKSSYLNNVLMSELALSKSYSSDKYSTRHFDLGSKKSLEKSVRAMMANVDELNKSIQSLTKYTIDKQRHDNMVFSLTQKRQQENESRLARGDPPLPMDDIKRIKAPQLQTRNGLLDELLASFDTNALADFSKTVTSENITKLFIAEAVAEEKVVGTKDRTLSSVSSTR</sequence>
<dbReference type="EMBL" id="HE600906">
    <property type="protein sequence ID" value="CAP24801.2"/>
    <property type="status" value="ALT_SEQ"/>
    <property type="molecule type" value="Genomic_DNA"/>
</dbReference>
<dbReference type="RefSeq" id="XP_002639414.1">
    <property type="nucleotide sequence ID" value="XM_002639368.1"/>
</dbReference>
<dbReference type="SMR" id="A8WVY9"/>
<dbReference type="FunCoup" id="A8WVY9">
    <property type="interactions" value="2829"/>
</dbReference>
<dbReference type="STRING" id="6238.A8WVY9"/>
<dbReference type="EnsemblMetazoa" id="CBG04003.1">
    <property type="protein sequence ID" value="CBG04003.1"/>
    <property type="gene ID" value="WBGene00026755"/>
</dbReference>
<dbReference type="WormBase" id="CBG04003">
    <property type="protein sequence ID" value="CBP14961"/>
    <property type="gene ID" value="WBGene00026755"/>
    <property type="gene designation" value="Cbr-eif-3.H"/>
</dbReference>
<dbReference type="eggNOG" id="KOG1560">
    <property type="taxonomic scope" value="Eukaryota"/>
</dbReference>
<dbReference type="HOGENOM" id="CLU_044094_0_0_1"/>
<dbReference type="InParanoid" id="A8WVY9"/>
<dbReference type="OrthoDB" id="10265695at2759"/>
<dbReference type="Proteomes" id="UP000008549">
    <property type="component" value="Unassembled WGS sequence"/>
</dbReference>
<dbReference type="GO" id="GO:0016282">
    <property type="term" value="C:eukaryotic 43S preinitiation complex"/>
    <property type="evidence" value="ECO:0000318"/>
    <property type="project" value="GO_Central"/>
</dbReference>
<dbReference type="GO" id="GO:0033290">
    <property type="term" value="C:eukaryotic 48S preinitiation complex"/>
    <property type="evidence" value="ECO:0007669"/>
    <property type="project" value="UniProtKB-UniRule"/>
</dbReference>
<dbReference type="GO" id="GO:0005852">
    <property type="term" value="C:eukaryotic translation initiation factor 3 complex"/>
    <property type="evidence" value="ECO:0000318"/>
    <property type="project" value="GO_Central"/>
</dbReference>
<dbReference type="GO" id="GO:0008237">
    <property type="term" value="F:metallopeptidase activity"/>
    <property type="evidence" value="ECO:0000318"/>
    <property type="project" value="GO_Central"/>
</dbReference>
<dbReference type="GO" id="GO:0003743">
    <property type="term" value="F:translation initiation factor activity"/>
    <property type="evidence" value="ECO:0007669"/>
    <property type="project" value="UniProtKB-UniRule"/>
</dbReference>
<dbReference type="GO" id="GO:0001732">
    <property type="term" value="P:formation of cytoplasmic translation initiation complex"/>
    <property type="evidence" value="ECO:0007669"/>
    <property type="project" value="UniProtKB-UniRule"/>
</dbReference>
<dbReference type="GO" id="GO:0006413">
    <property type="term" value="P:translational initiation"/>
    <property type="evidence" value="ECO:0000318"/>
    <property type="project" value="GO_Central"/>
</dbReference>
<dbReference type="CDD" id="cd08065">
    <property type="entry name" value="MPN_eIF3h"/>
    <property type="match status" value="1"/>
</dbReference>
<dbReference type="FunFam" id="3.40.140.10:FF:000087">
    <property type="entry name" value="Eukaryotic translation initiation factor 3 subunit H"/>
    <property type="match status" value="1"/>
</dbReference>
<dbReference type="Gene3D" id="3.40.140.10">
    <property type="entry name" value="Cytidine Deaminase, domain 2"/>
    <property type="match status" value="1"/>
</dbReference>
<dbReference type="HAMAP" id="MF_03007">
    <property type="entry name" value="eIF3h"/>
    <property type="match status" value="1"/>
</dbReference>
<dbReference type="InterPro" id="IPR027524">
    <property type="entry name" value="eIF3h"/>
</dbReference>
<dbReference type="InterPro" id="IPR045810">
    <property type="entry name" value="eIF3h_C"/>
</dbReference>
<dbReference type="InterPro" id="IPR000555">
    <property type="entry name" value="JAMM/MPN+_dom"/>
</dbReference>
<dbReference type="InterPro" id="IPR050242">
    <property type="entry name" value="JAMM_MPN+_peptidase_M67A"/>
</dbReference>
<dbReference type="InterPro" id="IPR037518">
    <property type="entry name" value="MPN"/>
</dbReference>
<dbReference type="PANTHER" id="PTHR10410">
    <property type="entry name" value="EUKARYOTIC TRANSLATION INITIATION FACTOR 3 -RELATED"/>
    <property type="match status" value="1"/>
</dbReference>
<dbReference type="Pfam" id="PF19445">
    <property type="entry name" value="eIF3h_C"/>
    <property type="match status" value="1"/>
</dbReference>
<dbReference type="Pfam" id="PF01398">
    <property type="entry name" value="JAB"/>
    <property type="match status" value="1"/>
</dbReference>
<dbReference type="SMART" id="SM00232">
    <property type="entry name" value="JAB_MPN"/>
    <property type="match status" value="1"/>
</dbReference>
<dbReference type="PROSITE" id="PS50249">
    <property type="entry name" value="MPN"/>
    <property type="match status" value="1"/>
</dbReference>
<reference key="1">
    <citation type="journal article" date="2003" name="PLoS Biol.">
        <title>The genome sequence of Caenorhabditis briggsae: a platform for comparative genomics.</title>
        <authorList>
            <person name="Stein L.D."/>
            <person name="Bao Z."/>
            <person name="Blasiar D."/>
            <person name="Blumenthal T."/>
            <person name="Brent M.R."/>
            <person name="Chen N."/>
            <person name="Chinwalla A."/>
            <person name="Clarke L."/>
            <person name="Clee C."/>
            <person name="Coghlan A."/>
            <person name="Coulson A."/>
            <person name="D'Eustachio P."/>
            <person name="Fitch D.H.A."/>
            <person name="Fulton L.A."/>
            <person name="Fulton R.E."/>
            <person name="Griffiths-Jones S."/>
            <person name="Harris T.W."/>
            <person name="Hillier L.W."/>
            <person name="Kamath R."/>
            <person name="Kuwabara P.E."/>
            <person name="Mardis E.R."/>
            <person name="Marra M.A."/>
            <person name="Miner T.L."/>
            <person name="Minx P."/>
            <person name="Mullikin J.C."/>
            <person name="Plumb R.W."/>
            <person name="Rogers J."/>
            <person name="Schein J.E."/>
            <person name="Sohrmann M."/>
            <person name="Spieth J."/>
            <person name="Stajich J.E."/>
            <person name="Wei C."/>
            <person name="Willey D."/>
            <person name="Wilson R.K."/>
            <person name="Durbin R.M."/>
            <person name="Waterston R.H."/>
        </authorList>
    </citation>
    <scope>NUCLEOTIDE SEQUENCE [LARGE SCALE GENOMIC DNA]</scope>
    <source>
        <strain>AF16</strain>
    </source>
</reference>